<feature type="chain" id="PRO_0000414350" description="Acireductone dioxygenase">
    <location>
        <begin position="1"/>
        <end position="344"/>
    </location>
</feature>
<feature type="binding site" evidence="1">
    <location>
        <position position="92"/>
    </location>
    <ligand>
        <name>Fe(2+)</name>
        <dbReference type="ChEBI" id="CHEBI:29033"/>
        <note>for iron-dependent acireductone dioxygenase activity</note>
    </ligand>
</feature>
<feature type="binding site" evidence="1">
    <location>
        <position position="92"/>
    </location>
    <ligand>
        <name>Ni(2+)</name>
        <dbReference type="ChEBI" id="CHEBI:49786"/>
        <note>for nickel-dependent acireductone dioxygenase activity</note>
    </ligand>
</feature>
<feature type="binding site" evidence="1">
    <location>
        <position position="94"/>
    </location>
    <ligand>
        <name>Fe(2+)</name>
        <dbReference type="ChEBI" id="CHEBI:29033"/>
        <note>for iron-dependent acireductone dioxygenase activity</note>
    </ligand>
</feature>
<feature type="binding site" evidence="1">
    <location>
        <position position="94"/>
    </location>
    <ligand>
        <name>Ni(2+)</name>
        <dbReference type="ChEBI" id="CHEBI:49786"/>
        <note>for nickel-dependent acireductone dioxygenase activity</note>
    </ligand>
</feature>
<feature type="binding site" evidence="1">
    <location>
        <position position="98"/>
    </location>
    <ligand>
        <name>Fe(2+)</name>
        <dbReference type="ChEBI" id="CHEBI:29033"/>
        <note>for iron-dependent acireductone dioxygenase activity</note>
    </ligand>
</feature>
<feature type="binding site" evidence="1">
    <location>
        <position position="98"/>
    </location>
    <ligand>
        <name>Ni(2+)</name>
        <dbReference type="ChEBI" id="CHEBI:49786"/>
        <note>for nickel-dependent acireductone dioxygenase activity</note>
    </ligand>
</feature>
<feature type="binding site" evidence="1">
    <location>
        <position position="137"/>
    </location>
    <ligand>
        <name>Fe(2+)</name>
        <dbReference type="ChEBI" id="CHEBI:29033"/>
        <note>for iron-dependent acireductone dioxygenase activity</note>
    </ligand>
</feature>
<feature type="binding site" evidence="1">
    <location>
        <position position="137"/>
    </location>
    <ligand>
        <name>Ni(2+)</name>
        <dbReference type="ChEBI" id="CHEBI:49786"/>
        <note>for nickel-dependent acireductone dioxygenase activity</note>
    </ligand>
</feature>
<proteinExistence type="inferred from homology"/>
<evidence type="ECO:0000255" key="1">
    <source>
        <dbReference type="HAMAP-Rule" id="MF_03154"/>
    </source>
</evidence>
<organism>
    <name type="scientific">Leishmania infantum</name>
    <dbReference type="NCBI Taxonomy" id="5671"/>
    <lineage>
        <taxon>Eukaryota</taxon>
        <taxon>Discoba</taxon>
        <taxon>Euglenozoa</taxon>
        <taxon>Kinetoplastea</taxon>
        <taxon>Metakinetoplastina</taxon>
        <taxon>Trypanosomatida</taxon>
        <taxon>Trypanosomatidae</taxon>
        <taxon>Leishmaniinae</taxon>
        <taxon>Leishmania</taxon>
    </lineage>
</organism>
<sequence length="344" mass="39069">MTDCWYIPEAVADRRDENRLSPNVPASYEVLGEVGIFYRHFDPKEVSDDIEGFIQPLLKKLNYQSYDVVNLSPANLGAEKFETLAEQHFMEHIHEDDEVRLILEGQGYFDVRDINDKWIRLLSKPGDCIVVPAGMYHRFTTDQSKDIKTLRIFKEAPRWIALNRGPEAEEKPARKEYLARLHAPAETAVGAANGRTIFSLRYPLKLDVELTAITKRLLEQHSKRPLALAIYLTGSTDPTTGESWCPDCVLAKPHVATRFAELRGKYGEERAIFLQLPVERASYLGNPNFPYRTHPTLQLASVPTLLVLTPAKDAKEKGDVQWHDLLDVKVRTCDADKADVLSLE</sequence>
<name>MTND_LEIIN</name>
<accession>A4HYT9</accession>
<gene>
    <name type="ORF">LINJ_20_0980</name>
</gene>
<keyword id="KW-0028">Amino-acid biosynthesis</keyword>
<keyword id="KW-0963">Cytoplasm</keyword>
<keyword id="KW-0223">Dioxygenase</keyword>
<keyword id="KW-0408">Iron</keyword>
<keyword id="KW-0479">Metal-binding</keyword>
<keyword id="KW-0486">Methionine biosynthesis</keyword>
<keyword id="KW-0533">Nickel</keyword>
<keyword id="KW-0539">Nucleus</keyword>
<keyword id="KW-0560">Oxidoreductase</keyword>
<keyword id="KW-1185">Reference proteome</keyword>
<protein>
    <recommendedName>
        <fullName evidence="1">Acireductone dioxygenase</fullName>
    </recommendedName>
    <alternativeName>
        <fullName evidence="1">Acireductone dioxygenase (Fe(2+)-requiring)</fullName>
        <shortName evidence="1">ARD'</shortName>
        <shortName evidence="1">Fe-ARD</shortName>
        <ecNumber evidence="1">1.13.11.54</ecNumber>
    </alternativeName>
    <alternativeName>
        <fullName evidence="1">Acireductone dioxygenase (Ni(2+)-requiring)</fullName>
        <shortName evidence="1">ARD</shortName>
        <shortName evidence="1">Ni-ARD</shortName>
        <ecNumber evidence="1">1.13.11.53</ecNumber>
    </alternativeName>
</protein>
<dbReference type="EC" id="1.13.11.54" evidence="1"/>
<dbReference type="EC" id="1.13.11.53" evidence="1"/>
<dbReference type="EMBL" id="FR796452">
    <property type="protein sequence ID" value="CAM67477.1"/>
    <property type="molecule type" value="Genomic_DNA"/>
</dbReference>
<dbReference type="RefSeq" id="XP_001465230.1">
    <property type="nucleotide sequence ID" value="XM_001465193.1"/>
</dbReference>
<dbReference type="SMR" id="A4HYT9"/>
<dbReference type="FunCoup" id="A4HYT9">
    <property type="interactions" value="55"/>
</dbReference>
<dbReference type="STRING" id="5671.A4HYT9"/>
<dbReference type="GeneID" id="5068645"/>
<dbReference type="KEGG" id="lif:LINJ_20_0980"/>
<dbReference type="VEuPathDB" id="TriTrypDB:LINF_200014700"/>
<dbReference type="eggNOG" id="KOG2107">
    <property type="taxonomic scope" value="Eukaryota"/>
</dbReference>
<dbReference type="InParanoid" id="A4HYT9"/>
<dbReference type="OMA" id="RDINDKW"/>
<dbReference type="UniPathway" id="UPA00904">
    <property type="reaction ID" value="UER00878"/>
</dbReference>
<dbReference type="Proteomes" id="UP000008153">
    <property type="component" value="Chromosome 20"/>
</dbReference>
<dbReference type="GO" id="GO:0005737">
    <property type="term" value="C:cytoplasm"/>
    <property type="evidence" value="ECO:0007669"/>
    <property type="project" value="UniProtKB-SubCell"/>
</dbReference>
<dbReference type="GO" id="GO:0005634">
    <property type="term" value="C:nucleus"/>
    <property type="evidence" value="ECO:0007669"/>
    <property type="project" value="UniProtKB-SubCell"/>
</dbReference>
<dbReference type="GO" id="GO:0010308">
    <property type="term" value="F:acireductone dioxygenase (Ni2+-requiring) activity"/>
    <property type="evidence" value="ECO:0007669"/>
    <property type="project" value="UniProtKB-UniRule"/>
</dbReference>
<dbReference type="GO" id="GO:0010309">
    <property type="term" value="F:acireductone dioxygenase [iron(II)-requiring] activity"/>
    <property type="evidence" value="ECO:0007669"/>
    <property type="project" value="UniProtKB-UniRule"/>
</dbReference>
<dbReference type="GO" id="GO:0005506">
    <property type="term" value="F:iron ion binding"/>
    <property type="evidence" value="ECO:0007669"/>
    <property type="project" value="UniProtKB-UniRule"/>
</dbReference>
<dbReference type="GO" id="GO:0016151">
    <property type="term" value="F:nickel cation binding"/>
    <property type="evidence" value="ECO:0007669"/>
    <property type="project" value="UniProtKB-UniRule"/>
</dbReference>
<dbReference type="GO" id="GO:0019509">
    <property type="term" value="P:L-methionine salvage from methylthioadenosine"/>
    <property type="evidence" value="ECO:0007669"/>
    <property type="project" value="UniProtKB-UniRule"/>
</dbReference>
<dbReference type="CDD" id="cd02232">
    <property type="entry name" value="cupin_ARD"/>
    <property type="match status" value="1"/>
</dbReference>
<dbReference type="FunFam" id="2.60.120.10:FF:000285">
    <property type="entry name" value="1,2-dihydroxy-3-keto-5-methylthiopentene dioxygenase"/>
    <property type="match status" value="1"/>
</dbReference>
<dbReference type="Gene3D" id="3.40.30.10">
    <property type="entry name" value="Glutaredoxin"/>
    <property type="match status" value="1"/>
</dbReference>
<dbReference type="Gene3D" id="2.60.120.10">
    <property type="entry name" value="Jelly Rolls"/>
    <property type="match status" value="1"/>
</dbReference>
<dbReference type="HAMAP" id="MF_03154">
    <property type="entry name" value="Salvage_MtnD_euk"/>
    <property type="match status" value="1"/>
</dbReference>
<dbReference type="InterPro" id="IPR004313">
    <property type="entry name" value="ARD"/>
</dbReference>
<dbReference type="InterPro" id="IPR027496">
    <property type="entry name" value="ARD_euk"/>
</dbReference>
<dbReference type="InterPro" id="IPR014710">
    <property type="entry name" value="RmlC-like_jellyroll"/>
</dbReference>
<dbReference type="InterPro" id="IPR011051">
    <property type="entry name" value="RmlC_Cupin_sf"/>
</dbReference>
<dbReference type="InterPro" id="IPR036249">
    <property type="entry name" value="Thioredoxin-like_sf"/>
</dbReference>
<dbReference type="InterPro" id="IPR010357">
    <property type="entry name" value="TXNDC17_dom"/>
</dbReference>
<dbReference type="PANTHER" id="PTHR23418">
    <property type="entry name" value="ACIREDUCTONE DIOXYGENASE"/>
    <property type="match status" value="1"/>
</dbReference>
<dbReference type="PANTHER" id="PTHR23418:SF0">
    <property type="entry name" value="ACIREDUCTONE DIOXYGENASE"/>
    <property type="match status" value="1"/>
</dbReference>
<dbReference type="Pfam" id="PF03079">
    <property type="entry name" value="ARD"/>
    <property type="match status" value="1"/>
</dbReference>
<dbReference type="Pfam" id="PF06110">
    <property type="entry name" value="TXD17-like_Trx"/>
    <property type="match status" value="1"/>
</dbReference>
<dbReference type="SUPFAM" id="SSF51182">
    <property type="entry name" value="RmlC-like cupins"/>
    <property type="match status" value="1"/>
</dbReference>
<dbReference type="SUPFAM" id="SSF52833">
    <property type="entry name" value="Thioredoxin-like"/>
    <property type="match status" value="1"/>
</dbReference>
<reference key="1">
    <citation type="journal article" date="2007" name="Nat. Genet.">
        <title>Comparative genomic analysis of three Leishmania species that cause diverse human disease.</title>
        <authorList>
            <person name="Peacock C.S."/>
            <person name="Seeger K."/>
            <person name="Harris D."/>
            <person name="Murphy L."/>
            <person name="Ruiz J.C."/>
            <person name="Quail M.A."/>
            <person name="Peters N."/>
            <person name="Adlem E."/>
            <person name="Tivey A."/>
            <person name="Aslett M."/>
            <person name="Kerhornou A."/>
            <person name="Ivens A."/>
            <person name="Fraser A."/>
            <person name="Rajandream M.-A."/>
            <person name="Carver T."/>
            <person name="Norbertczak H."/>
            <person name="Chillingworth T."/>
            <person name="Hance Z."/>
            <person name="Jagels K."/>
            <person name="Moule S."/>
            <person name="Ormond D."/>
            <person name="Rutter S."/>
            <person name="Sqaures R."/>
            <person name="Whitehead S."/>
            <person name="Rabbinowitsch E."/>
            <person name="Arrowsmith C."/>
            <person name="White B."/>
            <person name="Thurston S."/>
            <person name="Bringaud F."/>
            <person name="Baldauf S.L."/>
            <person name="Faulconbridge A."/>
            <person name="Jeffares D."/>
            <person name="Depledge D.P."/>
            <person name="Oyola S.O."/>
            <person name="Hilley J.D."/>
            <person name="Brito L.O."/>
            <person name="Tosi L.R.O."/>
            <person name="Barrell B."/>
            <person name="Cruz A.K."/>
            <person name="Mottram J.C."/>
            <person name="Smith D.F."/>
            <person name="Berriman M."/>
        </authorList>
    </citation>
    <scope>NUCLEOTIDE SEQUENCE [LARGE SCALE GENOMIC DNA]</scope>
    <source>
        <strain>JPCM5</strain>
    </source>
</reference>
<comment type="function">
    <text evidence="1">Catalyzes 2 different reactions between oxygen and the acireductone 1,2-dihydroxy-3-keto-5-methylthiopentene (DHK-MTPene) depending upon the metal bound in the active site. Fe-containing acireductone dioxygenase (Fe-ARD) produces formate and 2-keto-4-methylthiobutyrate (KMTB), the alpha-ketoacid precursor of methionine in the methionine recycle pathway. Ni-containing acireductone dioxygenase (Ni-ARD) produces methylthiopropionate, carbon monoxide and formate, and does not lie on the methionine recycle pathway.</text>
</comment>
<comment type="catalytic activity">
    <reaction evidence="1">
        <text>1,2-dihydroxy-5-(methylsulfanyl)pent-1-en-3-one + O2 = 4-methylsulfanyl-2-oxobutanoate + formate + 2 H(+)</text>
        <dbReference type="Rhea" id="RHEA:24504"/>
        <dbReference type="ChEBI" id="CHEBI:15378"/>
        <dbReference type="ChEBI" id="CHEBI:15379"/>
        <dbReference type="ChEBI" id="CHEBI:15740"/>
        <dbReference type="ChEBI" id="CHEBI:16723"/>
        <dbReference type="ChEBI" id="CHEBI:49252"/>
        <dbReference type="EC" id="1.13.11.54"/>
    </reaction>
</comment>
<comment type="catalytic activity">
    <reaction evidence="1">
        <text>1,2-dihydroxy-5-(methylsulfanyl)pent-1-en-3-one + O2 = 3-(methylsulfanyl)propanoate + CO + formate + 2 H(+)</text>
        <dbReference type="Rhea" id="RHEA:14161"/>
        <dbReference type="ChEBI" id="CHEBI:15378"/>
        <dbReference type="ChEBI" id="CHEBI:15379"/>
        <dbReference type="ChEBI" id="CHEBI:15740"/>
        <dbReference type="ChEBI" id="CHEBI:17245"/>
        <dbReference type="ChEBI" id="CHEBI:49016"/>
        <dbReference type="ChEBI" id="CHEBI:49252"/>
        <dbReference type="EC" id="1.13.11.53"/>
    </reaction>
</comment>
<comment type="cofactor">
    <cofactor evidence="1">
        <name>Fe(2+)</name>
        <dbReference type="ChEBI" id="CHEBI:29033"/>
    </cofactor>
    <cofactor evidence="1">
        <name>Ni(2+)</name>
        <dbReference type="ChEBI" id="CHEBI:49786"/>
    </cofactor>
    <text evidence="1">Binds either 1 Fe or Ni cation per monomer. Iron-binding promotes an acireductone dioxygenase reaction producing 2-keto-4-methylthiobutyrate, while nickel-binding promotes an acireductone dioxygenase reaction producing 3-(methylsulfanyl)propanoate.</text>
</comment>
<comment type="pathway">
    <text evidence="1">Amino-acid biosynthesis; L-methionine biosynthesis via salvage pathway; L-methionine from S-methyl-5-thio-alpha-D-ribose 1-phosphate: step 5/6.</text>
</comment>
<comment type="subcellular location">
    <subcellularLocation>
        <location evidence="1">Cytoplasm</location>
    </subcellularLocation>
    <subcellularLocation>
        <location evidence="1">Nucleus</location>
    </subcellularLocation>
</comment>
<comment type="similarity">
    <text evidence="1">Belongs to the acireductone dioxygenase (ARD) family.</text>
</comment>